<proteinExistence type="evidence at protein level"/>
<gene>
    <name type="primary">RHA1</name>
    <name type="synonym">RHA</name>
</gene>
<protein>
    <recommendedName>
        <fullName>Rhodotorucin-A peptides type 1</fullName>
    </recommendedName>
    <component>
        <recommendedName>
            <fullName>Rhodotorucin-A</fullName>
        </recommendedName>
        <alternativeName>
            <fullName>Rhodotorucine-A</fullName>
        </alternativeName>
    </component>
</protein>
<organism>
    <name type="scientific">Rhodotorula toruloides</name>
    <name type="common">Yeast</name>
    <name type="synonym">Rhodosporidium toruloides</name>
    <dbReference type="NCBI Taxonomy" id="5286"/>
    <lineage>
        <taxon>Eukaryota</taxon>
        <taxon>Fungi</taxon>
        <taxon>Dikarya</taxon>
        <taxon>Basidiomycota</taxon>
        <taxon>Pucciniomycotina</taxon>
        <taxon>Microbotryomycetes</taxon>
        <taxon>Sporidiobolales</taxon>
        <taxon>Sporidiobolaceae</taxon>
        <taxon>Rhodotorula</taxon>
    </lineage>
</organism>
<name>RHA1_RHOTO</name>
<feature type="propeptide" id="PRO_0000239408">
    <location>
        <begin position="1"/>
        <end position="3"/>
    </location>
</feature>
<feature type="peptide" id="PRO_0000022229" description="Rhodotorucin-A">
    <location>
        <begin position="4"/>
        <end position="14"/>
    </location>
</feature>
<feature type="propeptide" id="PRO_0000239409">
    <location>
        <begin position="15"/>
        <end position="18"/>
    </location>
</feature>
<feature type="peptide" id="PRO_0000022230" description="Rhodotorucin-A">
    <location>
        <begin position="19"/>
        <end position="29"/>
    </location>
</feature>
<feature type="propeptide" id="PRO_0000239410">
    <location>
        <begin position="30"/>
        <end position="33"/>
    </location>
</feature>
<feature type="peptide" id="PRO_0000022231" description="Rhodotorucin-A">
    <location>
        <begin position="34"/>
        <end position="44"/>
    </location>
</feature>
<feature type="propeptide" id="PRO_0000239411">
    <location>
        <begin position="45"/>
        <end position="48"/>
    </location>
</feature>
<feature type="peptide" id="PRO_0000022232" description="Rhodotorucin-A">
    <location>
        <begin position="49"/>
        <end position="59"/>
    </location>
</feature>
<feature type="propeptide" id="PRO_0000239412">
    <location>
        <begin position="60"/>
        <end position="62"/>
    </location>
</feature>
<feature type="site" description="Not methylated">
    <location>
        <position position="14"/>
    </location>
</feature>
<feature type="site" description="Not methylated">
    <location>
        <position position="29"/>
    </location>
</feature>
<feature type="site" description="Not methylated">
    <location>
        <position position="44"/>
    </location>
</feature>
<feature type="site" description="Not methylated">
    <location>
        <position position="59"/>
    </location>
</feature>
<feature type="lipid moiety-binding region" description="S-farnesyl cysteine" evidence="1">
    <location>
        <position position="14"/>
    </location>
</feature>
<feature type="lipid moiety-binding region" description="S-farnesyl cysteine" evidence="1">
    <location>
        <position position="29"/>
    </location>
</feature>
<feature type="lipid moiety-binding region" description="S-farnesyl cysteine" evidence="1">
    <location>
        <position position="44"/>
    </location>
</feature>
<feature type="lipid moiety-binding region" description="S-farnesyl cysteine" evidence="1">
    <location>
        <position position="59"/>
    </location>
</feature>
<comment type="function">
    <text>Rhodotorucin-A is a mating pheromone in cells of mating type A of Rhodosporidium toruloides.</text>
</comment>
<comment type="subcellular location">
    <subcellularLocation>
        <location evidence="2">Cell membrane</location>
        <topology evidence="2">Lipid-anchor</topology>
        <orientation evidence="2">Cytoplasmic side</orientation>
    </subcellularLocation>
</comment>
<comment type="sequence caution" evidence="2">
    <conflict type="erroneous initiation">
        <sequence resource="EMBL-CDS" id="BAA00073"/>
    </conflict>
</comment>
<keyword id="KW-1003">Cell membrane</keyword>
<keyword id="KW-0449">Lipoprotein</keyword>
<keyword id="KW-0472">Membrane</keyword>
<keyword id="KW-0588">Pheromone</keyword>
<keyword id="KW-0636">Prenylation</keyword>
<accession>P07907</accession>
<sequence>MVAYPEISWTRNGCTVSKYPEISWTRNGCTVSKYPEISWTRNGCTVSKYPEISWTRNGCTVA</sequence>
<evidence type="ECO:0000269" key="1">
    <source ref="3"/>
</evidence>
<evidence type="ECO:0000305" key="2"/>
<reference key="1">
    <citation type="journal article" date="1987" name="Agric. Biol. Chem.">
        <title>Cloning of a gene coding for rhodotorucine A, a farnesyl peptide mating pheromone of Rhodosporidium toruloides.</title>
        <authorList>
            <person name="Akada R."/>
            <person name="Minomi K."/>
            <person name="Yamashita I."/>
            <person name="Miyakawa T."/>
            <person name="Fukui S."/>
        </authorList>
    </citation>
    <scope>NUCLEOTIDE SEQUENCE [GENOMIC DNA]</scope>
</reference>
<reference key="2">
    <citation type="journal article" date="1989" name="Mol. Cell. Biol.">
        <title>Multiple genes coding for precursors of rhodotorucine A, a farnesyl peptide mating pheromone of the basidiomycetous yeast Rhodosporidium toruloides.</title>
        <authorList>
            <person name="Akada R."/>
            <person name="Minomi K."/>
            <person name="Kai J."/>
            <person name="Yamashita I."/>
            <person name="Miyakawa T."/>
            <person name="Fukui S."/>
        </authorList>
    </citation>
    <scope>NUCLEOTIDE SEQUENCE [GENOMIC DNA]</scope>
    <source>
        <strain>IFO 0559-M919</strain>
    </source>
</reference>
<reference key="3">
    <citation type="journal article" date="1978" name="Biochem. Biophys. Res. Commun.">
        <title>Structure of rhodotorucine A, a novel lipopeptide, inducing mating tube formation in Rhodosporidium toruloides.</title>
        <authorList>
            <person name="Kamiya Y."/>
            <person name="Sakurai A."/>
            <person name="Tamura S."/>
            <person name="Takahashi N."/>
            <person name="Abe K."/>
            <person name="Tsuchiya E."/>
            <person name="Fukui S."/>
            <person name="Kitada C."/>
            <person name="Fujino M."/>
        </authorList>
    </citation>
    <scope>ISOPRENYLATION AT CYS-14; CYS-29; CYS-44 AND CYS-59</scope>
</reference>
<dbReference type="EMBL" id="M28121">
    <property type="protein sequence ID" value="AAA77660.1"/>
    <property type="molecule type" value="Genomic_DNA"/>
</dbReference>
<dbReference type="EMBL" id="D00119">
    <property type="protein sequence ID" value="BAA00073.1"/>
    <property type="status" value="ALT_INIT"/>
    <property type="molecule type" value="Genomic_DNA"/>
</dbReference>
<dbReference type="PIR" id="A32824">
    <property type="entry name" value="A32824"/>
</dbReference>
<dbReference type="OrthoDB" id="2531158at2759"/>
<dbReference type="GO" id="GO:0005886">
    <property type="term" value="C:plasma membrane"/>
    <property type="evidence" value="ECO:0007669"/>
    <property type="project" value="UniProtKB-SubCell"/>
</dbReference>
<dbReference type="GO" id="GO:0005186">
    <property type="term" value="F:pheromone activity"/>
    <property type="evidence" value="ECO:0007669"/>
    <property type="project" value="UniProtKB-KW"/>
</dbReference>